<gene>
    <name evidence="1" type="primary">rpmA</name>
    <name type="ordered locus">stu0418</name>
</gene>
<organism>
    <name type="scientific">Streptococcus thermophilus (strain ATCC BAA-250 / LMG 18311)</name>
    <dbReference type="NCBI Taxonomy" id="264199"/>
    <lineage>
        <taxon>Bacteria</taxon>
        <taxon>Bacillati</taxon>
        <taxon>Bacillota</taxon>
        <taxon>Bacilli</taxon>
        <taxon>Lactobacillales</taxon>
        <taxon>Streptococcaceae</taxon>
        <taxon>Streptococcus</taxon>
    </lineage>
</organism>
<evidence type="ECO:0000255" key="1">
    <source>
        <dbReference type="HAMAP-Rule" id="MF_00539"/>
    </source>
</evidence>
<evidence type="ECO:0000256" key="2">
    <source>
        <dbReference type="SAM" id="MobiDB-lite"/>
    </source>
</evidence>
<evidence type="ECO:0000305" key="3"/>
<sequence>MLKTLENLQLFAHKKGGGSTSNGRDSQAKRLGAKAADGQTVSGGSILYRQRGTHIYPGVNVGRGGDDTLFAKVEGVVRFERKGRDKKQVSVYPVAK</sequence>
<feature type="chain" id="PRO_0000181185" description="Large ribosomal subunit protein bL27">
    <location>
        <begin position="1"/>
        <end position="96"/>
    </location>
</feature>
<feature type="region of interest" description="Disordered" evidence="2">
    <location>
        <begin position="13"/>
        <end position="36"/>
    </location>
</feature>
<accession>Q5M5P6</accession>
<comment type="similarity">
    <text evidence="1">Belongs to the bacterial ribosomal protein bL27 family.</text>
</comment>
<proteinExistence type="inferred from homology"/>
<keyword id="KW-1185">Reference proteome</keyword>
<keyword id="KW-0687">Ribonucleoprotein</keyword>
<keyword id="KW-0689">Ribosomal protein</keyword>
<protein>
    <recommendedName>
        <fullName evidence="1">Large ribosomal subunit protein bL27</fullName>
    </recommendedName>
    <alternativeName>
        <fullName evidence="3">50S ribosomal protein L27</fullName>
    </alternativeName>
</protein>
<name>RL27_STRT2</name>
<reference key="1">
    <citation type="journal article" date="2004" name="Nat. Biotechnol.">
        <title>Complete sequence and comparative genome analysis of the dairy bacterium Streptococcus thermophilus.</title>
        <authorList>
            <person name="Bolotin A."/>
            <person name="Quinquis B."/>
            <person name="Renault P."/>
            <person name="Sorokin A."/>
            <person name="Ehrlich S.D."/>
            <person name="Kulakauskas S."/>
            <person name="Lapidus A."/>
            <person name="Goltsman E."/>
            <person name="Mazur M."/>
            <person name="Pusch G.D."/>
            <person name="Fonstein M."/>
            <person name="Overbeek R."/>
            <person name="Kyprides N."/>
            <person name="Purnelle B."/>
            <person name="Prozzi D."/>
            <person name="Ngui K."/>
            <person name="Masuy D."/>
            <person name="Hancy F."/>
            <person name="Burteau S."/>
            <person name="Boutry M."/>
            <person name="Delcour J."/>
            <person name="Goffeau A."/>
            <person name="Hols P."/>
        </authorList>
    </citation>
    <scope>NUCLEOTIDE SEQUENCE [LARGE SCALE GENOMIC DNA]</scope>
    <source>
        <strain>ATCC BAA-250 / LMG 18311</strain>
    </source>
</reference>
<dbReference type="EMBL" id="CP000023">
    <property type="protein sequence ID" value="AAV60132.1"/>
    <property type="molecule type" value="Genomic_DNA"/>
</dbReference>
<dbReference type="RefSeq" id="WP_002885483.1">
    <property type="nucleotide sequence ID" value="NC_006448.1"/>
</dbReference>
<dbReference type="SMR" id="Q5M5P6"/>
<dbReference type="STRING" id="264199.stu0418"/>
<dbReference type="GeneID" id="93791587"/>
<dbReference type="KEGG" id="stl:stu0418"/>
<dbReference type="eggNOG" id="COG0211">
    <property type="taxonomic scope" value="Bacteria"/>
</dbReference>
<dbReference type="HOGENOM" id="CLU_095424_4_0_9"/>
<dbReference type="Proteomes" id="UP000001170">
    <property type="component" value="Chromosome"/>
</dbReference>
<dbReference type="GO" id="GO:0022625">
    <property type="term" value="C:cytosolic large ribosomal subunit"/>
    <property type="evidence" value="ECO:0007669"/>
    <property type="project" value="TreeGrafter"/>
</dbReference>
<dbReference type="GO" id="GO:0003735">
    <property type="term" value="F:structural constituent of ribosome"/>
    <property type="evidence" value="ECO:0007669"/>
    <property type="project" value="InterPro"/>
</dbReference>
<dbReference type="GO" id="GO:0006412">
    <property type="term" value="P:translation"/>
    <property type="evidence" value="ECO:0007669"/>
    <property type="project" value="UniProtKB-UniRule"/>
</dbReference>
<dbReference type="FunFam" id="2.40.50.100:FF:000004">
    <property type="entry name" value="50S ribosomal protein L27"/>
    <property type="match status" value="1"/>
</dbReference>
<dbReference type="Gene3D" id="2.40.50.100">
    <property type="match status" value="1"/>
</dbReference>
<dbReference type="HAMAP" id="MF_00539">
    <property type="entry name" value="Ribosomal_bL27"/>
    <property type="match status" value="1"/>
</dbReference>
<dbReference type="InterPro" id="IPR001684">
    <property type="entry name" value="Ribosomal_bL27"/>
</dbReference>
<dbReference type="InterPro" id="IPR018261">
    <property type="entry name" value="Ribosomal_bL27_CS"/>
</dbReference>
<dbReference type="NCBIfam" id="TIGR00062">
    <property type="entry name" value="L27"/>
    <property type="match status" value="1"/>
</dbReference>
<dbReference type="PANTHER" id="PTHR15893:SF0">
    <property type="entry name" value="LARGE RIBOSOMAL SUBUNIT PROTEIN BL27M"/>
    <property type="match status" value="1"/>
</dbReference>
<dbReference type="PANTHER" id="PTHR15893">
    <property type="entry name" value="RIBOSOMAL PROTEIN L27"/>
    <property type="match status" value="1"/>
</dbReference>
<dbReference type="Pfam" id="PF01016">
    <property type="entry name" value="Ribosomal_L27"/>
    <property type="match status" value="1"/>
</dbReference>
<dbReference type="PRINTS" id="PR00063">
    <property type="entry name" value="RIBOSOMALL27"/>
</dbReference>
<dbReference type="SUPFAM" id="SSF110324">
    <property type="entry name" value="Ribosomal L27 protein-like"/>
    <property type="match status" value="1"/>
</dbReference>
<dbReference type="PROSITE" id="PS00831">
    <property type="entry name" value="RIBOSOMAL_L27"/>
    <property type="match status" value="1"/>
</dbReference>